<organism>
    <name type="scientific">Xanthomonas oryzae pv. oryzae (strain MAFF 311018)</name>
    <dbReference type="NCBI Taxonomy" id="342109"/>
    <lineage>
        <taxon>Bacteria</taxon>
        <taxon>Pseudomonadati</taxon>
        <taxon>Pseudomonadota</taxon>
        <taxon>Gammaproteobacteria</taxon>
        <taxon>Lysobacterales</taxon>
        <taxon>Lysobacteraceae</taxon>
        <taxon>Xanthomonas</taxon>
    </lineage>
</organism>
<sequence length="568" mass="62400">MSHSVEDIKSESRRLRGSLEQSLADAVTGALREDDQTLIKYHGSYQQDDRDIRDERRQQKLEPAYQFMIRTRTPGGVITPAQWLALDGIATRYANHSLRITTRQAFQFHGVIKRELKATMQAINATLIDTLAACGDVNRNVQVAANPLLSQAHATLYADAACVSEHLLPNTRAYYEIWLDEERVSGSGNEDEPIYGDRYLPRKFKIGFAAPPLNDVDVFANDLGFIAILRDGRLLGYNVSIGGGMGASHGDAQTWPRVANVIGFVTRDQLLDIATAVVTTQRDFGNRAVRKRARFKYTIDDHGLDTIVAEIARRAGFALQPAQPFAFEHNGDRYGWVEGEDGLWHLTLSLPAGRIADTDTATHLSGLRAIAQLNVGEFRMTPNQNLVIAGVPASERARVDALVAQYALDAGNRSASALARGAMACVALPTCGLAMAEAERYLPDFSAALQPLLQQHGLADTPIVLRLSGCPNGCSRPYLAEIALVGKAPGRYNLMLGGDRRGQRLNTLYRENITEPEILAALEPLLARYAAERDHANDEGFGDFLHRAGLIALPSYPTHRRLDLELLA</sequence>
<reference key="1">
    <citation type="journal article" date="2005" name="Jpn. Agric. Res. Q.">
        <title>Genome sequence of Xanthomonas oryzae pv. oryzae suggests contribution of large numbers of effector genes and insertion sequences to its race diversity.</title>
        <authorList>
            <person name="Ochiai H."/>
            <person name="Inoue Y."/>
            <person name="Takeya M."/>
            <person name="Sasaki A."/>
            <person name="Kaku H."/>
        </authorList>
    </citation>
    <scope>NUCLEOTIDE SEQUENCE [LARGE SCALE GENOMIC DNA]</scope>
    <source>
        <strain>MAFF 311018</strain>
    </source>
</reference>
<gene>
    <name evidence="1" type="primary">cysI</name>
    <name type="ordered locus">XOO3200</name>
</gene>
<dbReference type="EC" id="1.8.1.2" evidence="1"/>
<dbReference type="EMBL" id="AP008229">
    <property type="protein sequence ID" value="BAE69955.1"/>
    <property type="status" value="ALT_INIT"/>
    <property type="molecule type" value="Genomic_DNA"/>
</dbReference>
<dbReference type="RefSeq" id="WP_011259872.1">
    <property type="nucleotide sequence ID" value="NC_007705.1"/>
</dbReference>
<dbReference type="SMR" id="Q2P0H2"/>
<dbReference type="KEGG" id="xom:XOO3200"/>
<dbReference type="HOGENOM" id="CLU_001975_3_2_6"/>
<dbReference type="UniPathway" id="UPA00140">
    <property type="reaction ID" value="UER00207"/>
</dbReference>
<dbReference type="GO" id="GO:0009337">
    <property type="term" value="C:sulfite reductase complex (NADPH)"/>
    <property type="evidence" value="ECO:0007669"/>
    <property type="project" value="InterPro"/>
</dbReference>
<dbReference type="GO" id="GO:0051539">
    <property type="term" value="F:4 iron, 4 sulfur cluster binding"/>
    <property type="evidence" value="ECO:0007669"/>
    <property type="project" value="UniProtKB-KW"/>
</dbReference>
<dbReference type="GO" id="GO:0020037">
    <property type="term" value="F:heme binding"/>
    <property type="evidence" value="ECO:0007669"/>
    <property type="project" value="InterPro"/>
</dbReference>
<dbReference type="GO" id="GO:0046872">
    <property type="term" value="F:metal ion binding"/>
    <property type="evidence" value="ECO:0007669"/>
    <property type="project" value="UniProtKB-KW"/>
</dbReference>
<dbReference type="GO" id="GO:0050661">
    <property type="term" value="F:NADP binding"/>
    <property type="evidence" value="ECO:0007669"/>
    <property type="project" value="InterPro"/>
</dbReference>
<dbReference type="GO" id="GO:0050311">
    <property type="term" value="F:sulfite reductase (ferredoxin) activity"/>
    <property type="evidence" value="ECO:0007669"/>
    <property type="project" value="TreeGrafter"/>
</dbReference>
<dbReference type="GO" id="GO:0004783">
    <property type="term" value="F:sulfite reductase (NADPH) activity"/>
    <property type="evidence" value="ECO:0007669"/>
    <property type="project" value="UniProtKB-UniRule"/>
</dbReference>
<dbReference type="GO" id="GO:0019344">
    <property type="term" value="P:cysteine biosynthetic process"/>
    <property type="evidence" value="ECO:0007669"/>
    <property type="project" value="UniProtKB-KW"/>
</dbReference>
<dbReference type="GO" id="GO:0070814">
    <property type="term" value="P:hydrogen sulfide biosynthetic process"/>
    <property type="evidence" value="ECO:0007669"/>
    <property type="project" value="UniProtKB-UniRule"/>
</dbReference>
<dbReference type="GO" id="GO:0000103">
    <property type="term" value="P:sulfate assimilation"/>
    <property type="evidence" value="ECO:0007669"/>
    <property type="project" value="UniProtKB-UniRule"/>
</dbReference>
<dbReference type="FunFam" id="3.30.413.10:FF:000003">
    <property type="entry name" value="Sulfite reductase [NADPH] hemoprotein beta-component"/>
    <property type="match status" value="1"/>
</dbReference>
<dbReference type="Gene3D" id="3.30.413.10">
    <property type="entry name" value="Sulfite Reductase Hemoprotein, domain 1"/>
    <property type="match status" value="2"/>
</dbReference>
<dbReference type="HAMAP" id="MF_01540">
    <property type="entry name" value="CysI"/>
    <property type="match status" value="1"/>
</dbReference>
<dbReference type="InterPro" id="IPR011786">
    <property type="entry name" value="CysI"/>
</dbReference>
<dbReference type="InterPro" id="IPR005117">
    <property type="entry name" value="NiRdtase/SiRdtase_haem-b_fer"/>
</dbReference>
<dbReference type="InterPro" id="IPR036136">
    <property type="entry name" value="Nit/Sulf_reduc_fer-like_dom_sf"/>
</dbReference>
<dbReference type="InterPro" id="IPR006067">
    <property type="entry name" value="NO2/SO3_Rdtase_4Fe4S_dom"/>
</dbReference>
<dbReference type="InterPro" id="IPR045169">
    <property type="entry name" value="NO2/SO3_Rdtase_4Fe4S_prot"/>
</dbReference>
<dbReference type="InterPro" id="IPR045854">
    <property type="entry name" value="NO2/SO3_Rdtase_4Fe4S_sf"/>
</dbReference>
<dbReference type="InterPro" id="IPR006066">
    <property type="entry name" value="NO2/SO3_Rdtase_FeS/sirohaem_BS"/>
</dbReference>
<dbReference type="NCBIfam" id="TIGR02041">
    <property type="entry name" value="CysI"/>
    <property type="match status" value="1"/>
</dbReference>
<dbReference type="NCBIfam" id="NF010029">
    <property type="entry name" value="PRK13504.1"/>
    <property type="match status" value="1"/>
</dbReference>
<dbReference type="PANTHER" id="PTHR11493:SF47">
    <property type="entry name" value="SULFITE REDUCTASE [NADPH] SUBUNIT BETA"/>
    <property type="match status" value="1"/>
</dbReference>
<dbReference type="PANTHER" id="PTHR11493">
    <property type="entry name" value="SULFITE REDUCTASE [NADPH] SUBUNIT BETA-RELATED"/>
    <property type="match status" value="1"/>
</dbReference>
<dbReference type="Pfam" id="PF01077">
    <property type="entry name" value="NIR_SIR"/>
    <property type="match status" value="1"/>
</dbReference>
<dbReference type="Pfam" id="PF03460">
    <property type="entry name" value="NIR_SIR_ferr"/>
    <property type="match status" value="2"/>
</dbReference>
<dbReference type="PRINTS" id="PR00397">
    <property type="entry name" value="SIROHAEM"/>
</dbReference>
<dbReference type="SUPFAM" id="SSF56014">
    <property type="entry name" value="Nitrite and sulphite reductase 4Fe-4S domain-like"/>
    <property type="match status" value="2"/>
</dbReference>
<dbReference type="SUPFAM" id="SSF55124">
    <property type="entry name" value="Nitrite/Sulfite reductase N-terminal domain-like"/>
    <property type="match status" value="2"/>
</dbReference>
<dbReference type="PROSITE" id="PS00365">
    <property type="entry name" value="NIR_SIR"/>
    <property type="match status" value="1"/>
</dbReference>
<protein>
    <recommendedName>
        <fullName evidence="1">Sulfite reductase [NADPH] hemoprotein beta-component</fullName>
        <shortName evidence="1">SiR-HP</shortName>
        <shortName evidence="1">SiRHP</shortName>
        <ecNumber evidence="1">1.8.1.2</ecNumber>
    </recommendedName>
</protein>
<comment type="function">
    <text evidence="1">Component of the sulfite reductase complex that catalyzes the 6-electron reduction of sulfite to sulfide. This is one of several activities required for the biosynthesis of L-cysteine from sulfate.</text>
</comment>
<comment type="catalytic activity">
    <reaction evidence="1">
        <text>hydrogen sulfide + 3 NADP(+) + 3 H2O = sulfite + 3 NADPH + 4 H(+)</text>
        <dbReference type="Rhea" id="RHEA:13801"/>
        <dbReference type="ChEBI" id="CHEBI:15377"/>
        <dbReference type="ChEBI" id="CHEBI:15378"/>
        <dbReference type="ChEBI" id="CHEBI:17359"/>
        <dbReference type="ChEBI" id="CHEBI:29919"/>
        <dbReference type="ChEBI" id="CHEBI:57783"/>
        <dbReference type="ChEBI" id="CHEBI:58349"/>
        <dbReference type="EC" id="1.8.1.2"/>
    </reaction>
</comment>
<comment type="cofactor">
    <cofactor evidence="1">
        <name>siroheme</name>
        <dbReference type="ChEBI" id="CHEBI:60052"/>
    </cofactor>
    <text evidence="1">Binds 1 siroheme per subunit.</text>
</comment>
<comment type="cofactor">
    <cofactor evidence="1">
        <name>[4Fe-4S] cluster</name>
        <dbReference type="ChEBI" id="CHEBI:49883"/>
    </cofactor>
    <text evidence="1">Binds 1 [4Fe-4S] cluster per subunit.</text>
</comment>
<comment type="pathway">
    <text evidence="1">Sulfur metabolism; hydrogen sulfide biosynthesis; hydrogen sulfide from sulfite (NADPH route): step 1/1.</text>
</comment>
<comment type="subunit">
    <text evidence="1">Alpha(8)-beta(8). The alpha component is a flavoprotein, the beta component is a hemoprotein.</text>
</comment>
<comment type="similarity">
    <text evidence="1">Belongs to the nitrite and sulfite reductase 4Fe-4S domain family.</text>
</comment>
<comment type="sequence caution" evidence="2">
    <conflict type="erroneous initiation">
        <sequence resource="EMBL-CDS" id="BAE69955"/>
    </conflict>
</comment>
<keyword id="KW-0004">4Fe-4S</keyword>
<keyword id="KW-0028">Amino-acid biosynthesis</keyword>
<keyword id="KW-0198">Cysteine biosynthesis</keyword>
<keyword id="KW-0349">Heme</keyword>
<keyword id="KW-0408">Iron</keyword>
<keyword id="KW-0411">Iron-sulfur</keyword>
<keyword id="KW-0479">Metal-binding</keyword>
<keyword id="KW-0521">NADP</keyword>
<keyword id="KW-0560">Oxidoreductase</keyword>
<name>CYSI_XANOM</name>
<proteinExistence type="inferred from homology"/>
<accession>Q2P0H2</accession>
<feature type="chain" id="PRO_0000388533" description="Sulfite reductase [NADPH] hemoprotein beta-component">
    <location>
        <begin position="1"/>
        <end position="568"/>
    </location>
</feature>
<feature type="binding site" evidence="1">
    <location>
        <position position="425"/>
    </location>
    <ligand>
        <name>[4Fe-4S] cluster</name>
        <dbReference type="ChEBI" id="CHEBI:49883"/>
    </ligand>
</feature>
<feature type="binding site" evidence="1">
    <location>
        <position position="431"/>
    </location>
    <ligand>
        <name>[4Fe-4S] cluster</name>
        <dbReference type="ChEBI" id="CHEBI:49883"/>
    </ligand>
</feature>
<feature type="binding site" evidence="1">
    <location>
        <position position="470"/>
    </location>
    <ligand>
        <name>[4Fe-4S] cluster</name>
        <dbReference type="ChEBI" id="CHEBI:49883"/>
    </ligand>
</feature>
<feature type="binding site" evidence="1">
    <location>
        <position position="474"/>
    </location>
    <ligand>
        <name>[4Fe-4S] cluster</name>
        <dbReference type="ChEBI" id="CHEBI:49883"/>
    </ligand>
</feature>
<feature type="binding site" description="axial binding residue" evidence="1">
    <location>
        <position position="474"/>
    </location>
    <ligand>
        <name>siroheme</name>
        <dbReference type="ChEBI" id="CHEBI:60052"/>
    </ligand>
    <ligandPart>
        <name>Fe</name>
        <dbReference type="ChEBI" id="CHEBI:18248"/>
    </ligandPart>
</feature>
<evidence type="ECO:0000255" key="1">
    <source>
        <dbReference type="HAMAP-Rule" id="MF_01540"/>
    </source>
</evidence>
<evidence type="ECO:0000305" key="2"/>